<reference key="1">
    <citation type="journal article" date="2008" name="PLoS ONE">
        <title>Genome sequence of the saprophyte Leptospira biflexa provides insights into the evolution of Leptospira and the pathogenesis of leptospirosis.</title>
        <authorList>
            <person name="Picardeau M."/>
            <person name="Bulach D.M."/>
            <person name="Bouchier C."/>
            <person name="Zuerner R.L."/>
            <person name="Zidane N."/>
            <person name="Wilson P.J."/>
            <person name="Creno S."/>
            <person name="Kuczek E.S."/>
            <person name="Bommezzadri S."/>
            <person name="Davis J.C."/>
            <person name="McGrath A."/>
            <person name="Johnson M.J."/>
            <person name="Boursaux-Eude C."/>
            <person name="Seemann T."/>
            <person name="Rouy Z."/>
            <person name="Coppel R.L."/>
            <person name="Rood J.I."/>
            <person name="Lajus A."/>
            <person name="Davies J.K."/>
            <person name="Medigue C."/>
            <person name="Adler B."/>
        </authorList>
    </citation>
    <scope>NUCLEOTIDE SEQUENCE [LARGE SCALE GENOMIC DNA]</scope>
    <source>
        <strain>Patoc 1 / ATCC 23582 / Paris</strain>
    </source>
</reference>
<evidence type="ECO:0000255" key="1">
    <source>
        <dbReference type="HAMAP-Rule" id="MF_00057"/>
    </source>
</evidence>
<keyword id="KW-0963">Cytoplasm</keyword>
<keyword id="KW-0448">Lipopolysaccharide biosynthesis</keyword>
<keyword id="KW-0548">Nucleotidyltransferase</keyword>
<keyword id="KW-1185">Reference proteome</keyword>
<keyword id="KW-0808">Transferase</keyword>
<protein>
    <recommendedName>
        <fullName evidence="1">3-deoxy-manno-octulosonate cytidylyltransferase</fullName>
        <ecNumber evidence="1">2.7.7.38</ecNumber>
    </recommendedName>
    <alternativeName>
        <fullName evidence="1">CMP-2-keto-3-deoxyoctulosonic acid synthase</fullName>
        <shortName evidence="1">CKS</shortName>
        <shortName evidence="1">CMP-KDO synthase</shortName>
    </alternativeName>
</protein>
<sequence length="246" mass="27285">MSDQILGVIPARFASTRFPGKPLALIGTKPMIQWTYHHASLSKSFHRLVVATDDKRIHDVVLGFGGESVLTSPDHPTGTDRIIEVAETYPNYGIIVNIQGDEPGMEASLIDGVVGLKTKHRNWEMTTAAVPFTSAEDPKDPNKVKVVFDNKGRANYFSRSPIPASFKGEAKYHRHLGIYAYERDFLMNYNQLPPSDWETVESLEQLRALQNGSTIGVYLSDKANLGVDSPADLEVVITEFKKKGLL</sequence>
<name>KDSB_LEPBP</name>
<accession>B0SK97</accession>
<comment type="function">
    <text evidence="1">Activates KDO (a required 8-carbon sugar) for incorporation into bacterial lipopolysaccharide in Gram-negative bacteria.</text>
</comment>
<comment type="catalytic activity">
    <reaction evidence="1">
        <text>3-deoxy-alpha-D-manno-oct-2-ulosonate + CTP = CMP-3-deoxy-beta-D-manno-octulosonate + diphosphate</text>
        <dbReference type="Rhea" id="RHEA:23448"/>
        <dbReference type="ChEBI" id="CHEBI:33019"/>
        <dbReference type="ChEBI" id="CHEBI:37563"/>
        <dbReference type="ChEBI" id="CHEBI:85986"/>
        <dbReference type="ChEBI" id="CHEBI:85987"/>
        <dbReference type="EC" id="2.7.7.38"/>
    </reaction>
</comment>
<comment type="pathway">
    <text evidence="1">Nucleotide-sugar biosynthesis; CMP-3-deoxy-D-manno-octulosonate biosynthesis; CMP-3-deoxy-D-manno-octulosonate from 3-deoxy-D-manno-octulosonate and CTP: step 1/1.</text>
</comment>
<comment type="pathway">
    <text evidence="1">Bacterial outer membrane biogenesis; lipopolysaccharide biosynthesis.</text>
</comment>
<comment type="subcellular location">
    <subcellularLocation>
        <location evidence="1">Cytoplasm</location>
    </subcellularLocation>
</comment>
<comment type="similarity">
    <text evidence="1">Belongs to the KdsB family.</text>
</comment>
<proteinExistence type="inferred from homology"/>
<organism>
    <name type="scientific">Leptospira biflexa serovar Patoc (strain Patoc 1 / ATCC 23582 / Paris)</name>
    <dbReference type="NCBI Taxonomy" id="456481"/>
    <lineage>
        <taxon>Bacteria</taxon>
        <taxon>Pseudomonadati</taxon>
        <taxon>Spirochaetota</taxon>
        <taxon>Spirochaetia</taxon>
        <taxon>Leptospirales</taxon>
        <taxon>Leptospiraceae</taxon>
        <taxon>Leptospira</taxon>
    </lineage>
</organism>
<dbReference type="EC" id="2.7.7.38" evidence="1"/>
<dbReference type="EMBL" id="CP000786">
    <property type="protein sequence ID" value="ABZ96344.1"/>
    <property type="molecule type" value="Genomic_DNA"/>
</dbReference>
<dbReference type="RefSeq" id="WP_012387232.1">
    <property type="nucleotide sequence ID" value="NC_010602.1"/>
</dbReference>
<dbReference type="SMR" id="B0SK97"/>
<dbReference type="STRING" id="456481.LEPBI_I0199"/>
<dbReference type="KEGG" id="lbi:LEPBI_I0199"/>
<dbReference type="HOGENOM" id="CLU_065038_0_1_12"/>
<dbReference type="OrthoDB" id="9815559at2"/>
<dbReference type="BioCyc" id="LBIF456481:LEPBI_RS00980-MONOMER"/>
<dbReference type="UniPathway" id="UPA00030"/>
<dbReference type="UniPathway" id="UPA00358">
    <property type="reaction ID" value="UER00476"/>
</dbReference>
<dbReference type="Proteomes" id="UP000001847">
    <property type="component" value="Chromosome I"/>
</dbReference>
<dbReference type="GO" id="GO:0005829">
    <property type="term" value="C:cytosol"/>
    <property type="evidence" value="ECO:0007669"/>
    <property type="project" value="TreeGrafter"/>
</dbReference>
<dbReference type="GO" id="GO:0008690">
    <property type="term" value="F:3-deoxy-manno-octulosonate cytidylyltransferase activity"/>
    <property type="evidence" value="ECO:0007669"/>
    <property type="project" value="UniProtKB-UniRule"/>
</dbReference>
<dbReference type="GO" id="GO:0033468">
    <property type="term" value="P:CMP-keto-3-deoxy-D-manno-octulosonic acid biosynthetic process"/>
    <property type="evidence" value="ECO:0007669"/>
    <property type="project" value="UniProtKB-UniRule"/>
</dbReference>
<dbReference type="GO" id="GO:0009103">
    <property type="term" value="P:lipopolysaccharide biosynthetic process"/>
    <property type="evidence" value="ECO:0007669"/>
    <property type="project" value="UniProtKB-UniRule"/>
</dbReference>
<dbReference type="CDD" id="cd02517">
    <property type="entry name" value="CMP-KDO-Synthetase"/>
    <property type="match status" value="1"/>
</dbReference>
<dbReference type="FunFam" id="3.90.550.10:FF:000011">
    <property type="entry name" value="3-deoxy-manno-octulosonate cytidylyltransferase"/>
    <property type="match status" value="1"/>
</dbReference>
<dbReference type="Gene3D" id="3.90.550.10">
    <property type="entry name" value="Spore Coat Polysaccharide Biosynthesis Protein SpsA, Chain A"/>
    <property type="match status" value="1"/>
</dbReference>
<dbReference type="HAMAP" id="MF_00057">
    <property type="entry name" value="KdsB"/>
    <property type="match status" value="1"/>
</dbReference>
<dbReference type="InterPro" id="IPR003329">
    <property type="entry name" value="Cytidylyl_trans"/>
</dbReference>
<dbReference type="InterPro" id="IPR004528">
    <property type="entry name" value="KdsB"/>
</dbReference>
<dbReference type="InterPro" id="IPR029044">
    <property type="entry name" value="Nucleotide-diphossugar_trans"/>
</dbReference>
<dbReference type="NCBIfam" id="TIGR00466">
    <property type="entry name" value="kdsB"/>
    <property type="match status" value="1"/>
</dbReference>
<dbReference type="NCBIfam" id="NF003950">
    <property type="entry name" value="PRK05450.1-3"/>
    <property type="match status" value="1"/>
</dbReference>
<dbReference type="NCBIfam" id="NF003952">
    <property type="entry name" value="PRK05450.1-5"/>
    <property type="match status" value="1"/>
</dbReference>
<dbReference type="PANTHER" id="PTHR42866">
    <property type="entry name" value="3-DEOXY-MANNO-OCTULOSONATE CYTIDYLYLTRANSFERASE"/>
    <property type="match status" value="1"/>
</dbReference>
<dbReference type="PANTHER" id="PTHR42866:SF2">
    <property type="entry name" value="3-DEOXY-MANNO-OCTULOSONATE CYTIDYLYLTRANSFERASE, MITOCHONDRIAL"/>
    <property type="match status" value="1"/>
</dbReference>
<dbReference type="Pfam" id="PF02348">
    <property type="entry name" value="CTP_transf_3"/>
    <property type="match status" value="1"/>
</dbReference>
<dbReference type="SUPFAM" id="SSF53448">
    <property type="entry name" value="Nucleotide-diphospho-sugar transferases"/>
    <property type="match status" value="1"/>
</dbReference>
<feature type="chain" id="PRO_0000370084" description="3-deoxy-manno-octulosonate cytidylyltransferase">
    <location>
        <begin position="1"/>
        <end position="246"/>
    </location>
</feature>
<gene>
    <name evidence="1" type="primary">kdsB</name>
    <name type="ordered locus">LEPBI_I0199</name>
</gene>